<reference key="1">
    <citation type="journal article" date="2000" name="FEBS Lett.">
        <title>Duplication of genes encoding non-clathrin coat protein gamma-COP in vertebrate, insect and plant evolution.</title>
        <authorList>
            <person name="Hahn Y."/>
            <person name="Lee Y.J."/>
            <person name="Yun J.H."/>
            <person name="Yang S.K."/>
            <person name="Park C.W."/>
            <person name="Mita K."/>
            <person name="Huh T.-L."/>
            <person name="Rhee M."/>
            <person name="Chung J.H."/>
        </authorList>
    </citation>
    <scope>NUCLEOTIDE SEQUENCE [MRNA]</scope>
</reference>
<reference key="2">
    <citation type="journal article" date="2005" name="Science">
        <title>The transcriptional landscape of the mammalian genome.</title>
        <authorList>
            <person name="Carninci P."/>
            <person name="Kasukawa T."/>
            <person name="Katayama S."/>
            <person name="Gough J."/>
            <person name="Frith M.C."/>
            <person name="Maeda N."/>
            <person name="Oyama R."/>
            <person name="Ravasi T."/>
            <person name="Lenhard B."/>
            <person name="Wells C."/>
            <person name="Kodzius R."/>
            <person name="Shimokawa K."/>
            <person name="Bajic V.B."/>
            <person name="Brenner S.E."/>
            <person name="Batalov S."/>
            <person name="Forrest A.R."/>
            <person name="Zavolan M."/>
            <person name="Davis M.J."/>
            <person name="Wilming L.G."/>
            <person name="Aidinis V."/>
            <person name="Allen J.E."/>
            <person name="Ambesi-Impiombato A."/>
            <person name="Apweiler R."/>
            <person name="Aturaliya R.N."/>
            <person name="Bailey T.L."/>
            <person name="Bansal M."/>
            <person name="Baxter L."/>
            <person name="Beisel K.W."/>
            <person name="Bersano T."/>
            <person name="Bono H."/>
            <person name="Chalk A.M."/>
            <person name="Chiu K.P."/>
            <person name="Choudhary V."/>
            <person name="Christoffels A."/>
            <person name="Clutterbuck D.R."/>
            <person name="Crowe M.L."/>
            <person name="Dalla E."/>
            <person name="Dalrymple B.P."/>
            <person name="de Bono B."/>
            <person name="Della Gatta G."/>
            <person name="di Bernardo D."/>
            <person name="Down T."/>
            <person name="Engstrom P."/>
            <person name="Fagiolini M."/>
            <person name="Faulkner G."/>
            <person name="Fletcher C.F."/>
            <person name="Fukushima T."/>
            <person name="Furuno M."/>
            <person name="Futaki S."/>
            <person name="Gariboldi M."/>
            <person name="Georgii-Hemming P."/>
            <person name="Gingeras T.R."/>
            <person name="Gojobori T."/>
            <person name="Green R.E."/>
            <person name="Gustincich S."/>
            <person name="Harbers M."/>
            <person name="Hayashi Y."/>
            <person name="Hensch T.K."/>
            <person name="Hirokawa N."/>
            <person name="Hill D."/>
            <person name="Huminiecki L."/>
            <person name="Iacono M."/>
            <person name="Ikeo K."/>
            <person name="Iwama A."/>
            <person name="Ishikawa T."/>
            <person name="Jakt M."/>
            <person name="Kanapin A."/>
            <person name="Katoh M."/>
            <person name="Kawasawa Y."/>
            <person name="Kelso J."/>
            <person name="Kitamura H."/>
            <person name="Kitano H."/>
            <person name="Kollias G."/>
            <person name="Krishnan S.P."/>
            <person name="Kruger A."/>
            <person name="Kummerfeld S.K."/>
            <person name="Kurochkin I.V."/>
            <person name="Lareau L.F."/>
            <person name="Lazarevic D."/>
            <person name="Lipovich L."/>
            <person name="Liu J."/>
            <person name="Liuni S."/>
            <person name="McWilliam S."/>
            <person name="Madan Babu M."/>
            <person name="Madera M."/>
            <person name="Marchionni L."/>
            <person name="Matsuda H."/>
            <person name="Matsuzawa S."/>
            <person name="Miki H."/>
            <person name="Mignone F."/>
            <person name="Miyake S."/>
            <person name="Morris K."/>
            <person name="Mottagui-Tabar S."/>
            <person name="Mulder N."/>
            <person name="Nakano N."/>
            <person name="Nakauchi H."/>
            <person name="Ng P."/>
            <person name="Nilsson R."/>
            <person name="Nishiguchi S."/>
            <person name="Nishikawa S."/>
            <person name="Nori F."/>
            <person name="Ohara O."/>
            <person name="Okazaki Y."/>
            <person name="Orlando V."/>
            <person name="Pang K.C."/>
            <person name="Pavan W.J."/>
            <person name="Pavesi G."/>
            <person name="Pesole G."/>
            <person name="Petrovsky N."/>
            <person name="Piazza S."/>
            <person name="Reed J."/>
            <person name="Reid J.F."/>
            <person name="Ring B.Z."/>
            <person name="Ringwald M."/>
            <person name="Rost B."/>
            <person name="Ruan Y."/>
            <person name="Salzberg S.L."/>
            <person name="Sandelin A."/>
            <person name="Schneider C."/>
            <person name="Schoenbach C."/>
            <person name="Sekiguchi K."/>
            <person name="Semple C.A."/>
            <person name="Seno S."/>
            <person name="Sessa L."/>
            <person name="Sheng Y."/>
            <person name="Shibata Y."/>
            <person name="Shimada H."/>
            <person name="Shimada K."/>
            <person name="Silva D."/>
            <person name="Sinclair B."/>
            <person name="Sperling S."/>
            <person name="Stupka E."/>
            <person name="Sugiura K."/>
            <person name="Sultana R."/>
            <person name="Takenaka Y."/>
            <person name="Taki K."/>
            <person name="Tammoja K."/>
            <person name="Tan S.L."/>
            <person name="Tang S."/>
            <person name="Taylor M.S."/>
            <person name="Tegner J."/>
            <person name="Teichmann S.A."/>
            <person name="Ueda H.R."/>
            <person name="van Nimwegen E."/>
            <person name="Verardo R."/>
            <person name="Wei C.L."/>
            <person name="Yagi K."/>
            <person name="Yamanishi H."/>
            <person name="Zabarovsky E."/>
            <person name="Zhu S."/>
            <person name="Zimmer A."/>
            <person name="Hide W."/>
            <person name="Bult C."/>
            <person name="Grimmond S.M."/>
            <person name="Teasdale R.D."/>
            <person name="Liu E.T."/>
            <person name="Brusic V."/>
            <person name="Quackenbush J."/>
            <person name="Wahlestedt C."/>
            <person name="Mattick J.S."/>
            <person name="Hume D.A."/>
            <person name="Kai C."/>
            <person name="Sasaki D."/>
            <person name="Tomaru Y."/>
            <person name="Fukuda S."/>
            <person name="Kanamori-Katayama M."/>
            <person name="Suzuki M."/>
            <person name="Aoki J."/>
            <person name="Arakawa T."/>
            <person name="Iida J."/>
            <person name="Imamura K."/>
            <person name="Itoh M."/>
            <person name="Kato T."/>
            <person name="Kawaji H."/>
            <person name="Kawagashira N."/>
            <person name="Kawashima T."/>
            <person name="Kojima M."/>
            <person name="Kondo S."/>
            <person name="Konno H."/>
            <person name="Nakano K."/>
            <person name="Ninomiya N."/>
            <person name="Nishio T."/>
            <person name="Okada M."/>
            <person name="Plessy C."/>
            <person name="Shibata K."/>
            <person name="Shiraki T."/>
            <person name="Suzuki S."/>
            <person name="Tagami M."/>
            <person name="Waki K."/>
            <person name="Watahiki A."/>
            <person name="Okamura-Oho Y."/>
            <person name="Suzuki H."/>
            <person name="Kawai J."/>
            <person name="Hayashizaki Y."/>
        </authorList>
    </citation>
    <scope>NUCLEOTIDE SEQUENCE [LARGE SCALE MRNA]</scope>
    <source>
        <strain>C57BL/6J</strain>
        <strain>NOD</strain>
        <tissue>Bone marrow</tissue>
        <tissue>Embryo</tissue>
        <tissue>Kidney</tissue>
        <tissue>Spleen</tissue>
    </source>
</reference>
<reference key="3">
    <citation type="journal article" date="2004" name="Genome Res.">
        <title>The status, quality, and expansion of the NIH full-length cDNA project: the Mammalian Gene Collection (MGC).</title>
        <authorList>
            <consortium name="The MGC Project Team"/>
        </authorList>
    </citation>
    <scope>NUCLEOTIDE SEQUENCE [LARGE SCALE MRNA]</scope>
    <source>
        <strain>Czech II</strain>
        <strain>FVB/N</strain>
        <tissue>Mammary tumor</tissue>
        <tissue>Salivary gland</tissue>
    </source>
</reference>
<reference key="4">
    <citation type="journal article" date="2007" name="Proc. Natl. Acad. Sci. U.S.A.">
        <title>Differential localization of coatomer complex isoforms within the Golgi apparatus.</title>
        <authorList>
            <person name="Moelleken J."/>
            <person name="Malsam J."/>
            <person name="Betts M.J."/>
            <person name="Movafeghi A."/>
            <person name="Reckmann I."/>
            <person name="Meissner I."/>
            <person name="Hellwig A."/>
            <person name="Russell R.B."/>
            <person name="Sollner T."/>
            <person name="Brugger B."/>
            <person name="Wieland F.T."/>
        </authorList>
    </citation>
    <scope>SUBCELLULAR LOCATION</scope>
</reference>
<reference key="5">
    <citation type="journal article" date="2008" name="PLoS Biol.">
        <title>COPI complex is a regulator of lipid homeostasis.</title>
        <authorList>
            <person name="Beller M."/>
            <person name="Sztalryd C."/>
            <person name="Southall N."/>
            <person name="Bell M."/>
            <person name="Jackle H."/>
            <person name="Auld D.S."/>
            <person name="Oliver B."/>
        </authorList>
    </citation>
    <scope>FUNCTION</scope>
</reference>
<reference key="6">
    <citation type="journal article" date="2010" name="Cell">
        <title>A tissue-specific atlas of mouse protein phosphorylation and expression.</title>
        <authorList>
            <person name="Huttlin E.L."/>
            <person name="Jedrychowski M.P."/>
            <person name="Elias J.E."/>
            <person name="Goswami T."/>
            <person name="Rad R."/>
            <person name="Beausoleil S.A."/>
            <person name="Villen J."/>
            <person name="Haas W."/>
            <person name="Sowa M.E."/>
            <person name="Gygi S.P."/>
        </authorList>
    </citation>
    <scope>IDENTIFICATION BY MASS SPECTROMETRY [LARGE SCALE ANALYSIS]</scope>
    <source>
        <tissue>Brain</tissue>
        <tissue>Brown adipose tissue</tissue>
        <tissue>Heart</tissue>
        <tissue>Kidney</tissue>
        <tissue>Liver</tissue>
        <tissue>Lung</tissue>
        <tissue>Pancreas</tissue>
        <tissue>Spleen</tissue>
        <tissue>Testis</tissue>
    </source>
</reference>
<gene>
    <name type="primary">Copg1</name>
    <name type="synonym">Copg</name>
</gene>
<keyword id="KW-0002">3D-structure</keyword>
<keyword id="KW-0963">Cytoplasm</keyword>
<keyword id="KW-0968">Cytoplasmic vesicle</keyword>
<keyword id="KW-0931">ER-Golgi transport</keyword>
<keyword id="KW-0333">Golgi apparatus</keyword>
<keyword id="KW-0472">Membrane</keyword>
<keyword id="KW-0597">Phosphoprotein</keyword>
<keyword id="KW-0653">Protein transport</keyword>
<keyword id="KW-1185">Reference proteome</keyword>
<keyword id="KW-0677">Repeat</keyword>
<keyword id="KW-0813">Transport</keyword>
<proteinExistence type="evidence at protein level"/>
<name>COPG1_MOUSE</name>
<protein>
    <recommendedName>
        <fullName>Coatomer subunit gamma-1</fullName>
    </recommendedName>
    <alternativeName>
        <fullName>Gamma-1-coat protein</fullName>
        <shortName>Gamma-1-COP</shortName>
    </alternativeName>
</protein>
<comment type="function">
    <text evidence="1 5">The coatomer is a cytosolic protein complex that binds to dilysine motifs and reversibly associates with Golgi non-clathrin-coated vesicles, which further mediate biosynthetic protein transport from the ER, via the Golgi up to the trans Golgi network. Coatomer complex is required for budding from Golgi membranes, and is essential for the retrograde Golgi-to-ER transport of dilysine-tagged proteins. In mammals, the coatomer can only be recruited by membranes associated to ADP-ribosylation factors (ARFs), which are small GTP-binding proteins; the complex also influences the Golgi structural integrity, as well as the processing, activity, and endocytic recycling of LDL receptors (By similarity). Required for limiting lipid storage in lipid droplets. Involved in lipid homeostasis by regulating the presence of perilipin family members PLIN2 and PLIN3 at the lipid droplet surface and promoting the association of adipocyte triglyceride lipase (PNPLA2) with the lipid droplet surface to mediate lipolysis.</text>
</comment>
<comment type="subunit">
    <text evidence="2">Oligomeric complex that consists of at least the alpha, beta, beta', gamma, delta, epsilon and zeta subunits. Interacts with ZNF289/ARFGAP2 through its C-terminal appendage domain (By similarity). Interacts with EGFR upon EGF treatment; interaction is essential for regulation of EGF-dependent nuclear transport of EGFR by retrograde trafficking from the Golgi to the ER (By similarity). The coatomer interacts with KDEL receptors; the interaction is important for retrograde trafficking of KDEL-bearing proteins from the Golgi to the endoplasmic reticulum (By similarity). Interacts with COPB1 (By similarity). Interacts with TMED10 (via C-terminus). Interacts with TMED2, TMED3, TMED7 and TMED9 (By similarity).</text>
</comment>
<comment type="subcellular location">
    <subcellularLocation>
        <location evidence="4">Cytoplasm</location>
        <location evidence="4">Cytosol</location>
    </subcellularLocation>
    <subcellularLocation>
        <location evidence="4">Golgi apparatus membrane</location>
        <topology evidence="4">Peripheral membrane protein</topology>
        <orientation evidence="4">Cytoplasmic side</orientation>
    </subcellularLocation>
    <subcellularLocation>
        <location evidence="1">Cytoplasmic vesicle</location>
        <location evidence="1">COPI-coated vesicle membrane</location>
        <topology evidence="1">Peripheral membrane protein</topology>
        <orientation evidence="1">Cytoplasmic side</orientation>
    </subcellularLocation>
    <text evidence="1">The coatomer is cytoplasmic or polymerized on the cytoplasmic side of the Golgi, as well as on the vesicles/buds originating from it. Predominantly located in the cis-Golgi apparatus.</text>
</comment>
<comment type="similarity">
    <text evidence="6">Belongs to the COPG family.</text>
</comment>
<comment type="sequence caution" evidence="6">
    <conflict type="frameshift">
        <sequence resource="EMBL-CDS" id="BAC36811"/>
    </conflict>
</comment>
<feature type="chain" id="PRO_0000304939" description="Coatomer subunit gamma-1">
    <location>
        <begin position="1"/>
        <end position="874"/>
    </location>
</feature>
<feature type="repeat" description="HEAT 1">
    <location>
        <begin position="64"/>
        <end position="101"/>
    </location>
</feature>
<feature type="repeat" description="HEAT 2">
    <location>
        <begin position="283"/>
        <end position="320"/>
    </location>
</feature>
<feature type="repeat" description="HEAT 3">
    <location>
        <begin position="322"/>
        <end position="355"/>
    </location>
</feature>
<feature type="repeat" description="HEAT 4">
    <location>
        <begin position="356"/>
        <end position="392"/>
    </location>
</feature>
<feature type="region of interest" description="Disordered" evidence="3">
    <location>
        <begin position="1"/>
        <end position="21"/>
    </location>
</feature>
<feature type="region of interest" description="Interaction with ZNF289/ARFGAP2" evidence="1">
    <location>
        <begin position="609"/>
        <end position="874"/>
    </location>
</feature>
<feature type="compositionally biased region" description="Basic and acidic residues" evidence="3">
    <location>
        <begin position="1"/>
        <end position="11"/>
    </location>
</feature>
<feature type="modified residue" description="Phosphothreonine" evidence="2">
    <location>
        <position position="594"/>
    </location>
</feature>
<feature type="sequence conflict" description="In Ref. 3; AAH24896." evidence="6" ref="3">
    <original>H</original>
    <variation>P</variation>
    <location>
        <position position="811"/>
    </location>
</feature>
<feature type="sequence conflict" description="In Ref. 2; BAE31753/BAE30713/BAE30269." evidence="6" ref="2">
    <original>L</original>
    <variation>F</variation>
    <location>
        <position position="841"/>
    </location>
</feature>
<feature type="sequence conflict" description="In Ref. 2; BAC36811." evidence="6" ref="2">
    <original>R</original>
    <variation>H</variation>
    <location>
        <position position="843"/>
    </location>
</feature>
<evidence type="ECO:0000250" key="1"/>
<evidence type="ECO:0000250" key="2">
    <source>
        <dbReference type="UniProtKB" id="Q9Y678"/>
    </source>
</evidence>
<evidence type="ECO:0000256" key="3">
    <source>
        <dbReference type="SAM" id="MobiDB-lite"/>
    </source>
</evidence>
<evidence type="ECO:0000269" key="4">
    <source>
    </source>
</evidence>
<evidence type="ECO:0000269" key="5">
    <source>
    </source>
</evidence>
<evidence type="ECO:0000305" key="6"/>
<accession>Q9QZE5</accession>
<accession>Q3U9F4</accession>
<accession>Q8BP96</accession>
<accession>Q8R1A7</accession>
<accession>Q922C6</accession>
<organism>
    <name type="scientific">Mus musculus</name>
    <name type="common">Mouse</name>
    <dbReference type="NCBI Taxonomy" id="10090"/>
    <lineage>
        <taxon>Eukaryota</taxon>
        <taxon>Metazoa</taxon>
        <taxon>Chordata</taxon>
        <taxon>Craniata</taxon>
        <taxon>Vertebrata</taxon>
        <taxon>Euteleostomi</taxon>
        <taxon>Mammalia</taxon>
        <taxon>Eutheria</taxon>
        <taxon>Euarchontoglires</taxon>
        <taxon>Glires</taxon>
        <taxon>Rodentia</taxon>
        <taxon>Myomorpha</taxon>
        <taxon>Muroidea</taxon>
        <taxon>Muridae</taxon>
        <taxon>Murinae</taxon>
        <taxon>Mus</taxon>
        <taxon>Mus</taxon>
    </lineage>
</organism>
<sequence>MLKKFDKKDEESGGGSNPLQHLEKSAVLQEARVFNETPINPRKCAHILTKILYLINQGEHLGTTEATEAFFAMTKLFQSNDPTLRRMCYLTIKEMSCIAEDVIIVTSSLTKDMTGKEDNYRGPAVRALCQITDSTMLQAVERYMKQAIVDKVPSVSSSALVSSLHLLKCSFDVVKRWVNEAQEAASSDNIMVQYHALGLLYHVRKNDRLAVSKMISKFTRHGLKSPFAYCMMIRVASKQLEEEDGSRDSPLFDFIESCLRNKHEMVVYEAASAIVNLPGCSAKELAPAVSVLQLFCSSPKAALRYAAVRTLNKVAMKHPSAVTACNLDLENLVTDSNRSIATLAITTLLKTGSESSIDRLMKQISSFMSEISDEFKVVVVQAISALCQKYPRKHAVLMNFLFTMLREEGGFEYKRAIVDCIISIIEENSESKETGLSHLCEFIEDCEFTVLATRILHLLGQEGPKTNNPSKYIRFIYNRVVLEHEEVRAGAVSALAKFGAQNEEMLPSILVLLKRCVMDDDNEVRDRATFYLNVLEQKQKALNAGYILNGLTVSIPGLEKALQQYTLEPSEKPFDLKSVPLATTPMAEQRPESTATAAVKQPEKVAATRQEIFQEQLAAVPEFQGLGPLFKSSPEPVALTESETEYVIRCTKHTFSDHLVFQFDCTNTLNDQTLENVTVQMEPTEAYEVLSYVPARSLPYNQPGTCYTLVALPTEDPTAVACTFSCVMKFTVKDCDPNTGEIDEEGYEDEYVLEDLEVTVADHIQKVMKVNFEAAWDEVGDEFEKEETFTLSTIKTLEEAVGNIVKFLGMHPCERSDKVPENKNTHTLLLAGVFRGGHDILVRSRLLLLDTVTMQVTARSSEELPVDIILASVG</sequence>
<dbReference type="EMBL" id="AF187079">
    <property type="protein sequence ID" value="AAF01325.1"/>
    <property type="molecule type" value="mRNA"/>
</dbReference>
<dbReference type="EMBL" id="AK049417">
    <property type="protein sequence ID" value="BAC33743.1"/>
    <property type="molecule type" value="mRNA"/>
</dbReference>
<dbReference type="EMBL" id="AK077461">
    <property type="protein sequence ID" value="BAC36811.1"/>
    <property type="status" value="ALT_FRAME"/>
    <property type="molecule type" value="mRNA"/>
</dbReference>
<dbReference type="EMBL" id="AK147895">
    <property type="protein sequence ID" value="BAE28212.1"/>
    <property type="molecule type" value="mRNA"/>
</dbReference>
<dbReference type="EMBL" id="AK151284">
    <property type="protein sequence ID" value="BAE30269.1"/>
    <property type="molecule type" value="mRNA"/>
</dbReference>
<dbReference type="EMBL" id="AK151816">
    <property type="protein sequence ID" value="BAE30713.1"/>
    <property type="molecule type" value="mRNA"/>
</dbReference>
<dbReference type="EMBL" id="AK153142">
    <property type="protein sequence ID" value="BAE31753.1"/>
    <property type="molecule type" value="mRNA"/>
</dbReference>
<dbReference type="EMBL" id="AK164280">
    <property type="protein sequence ID" value="BAE37716.1"/>
    <property type="molecule type" value="mRNA"/>
</dbReference>
<dbReference type="EMBL" id="AK169256">
    <property type="protein sequence ID" value="BAE41019.1"/>
    <property type="molecule type" value="mRNA"/>
</dbReference>
<dbReference type="EMBL" id="AK171950">
    <property type="protein sequence ID" value="BAE42743.1"/>
    <property type="molecule type" value="mRNA"/>
</dbReference>
<dbReference type="EMBL" id="AK172519">
    <property type="protein sequence ID" value="BAE43046.1"/>
    <property type="molecule type" value="mRNA"/>
</dbReference>
<dbReference type="EMBL" id="BC008553">
    <property type="protein sequence ID" value="AAH08553.1"/>
    <property type="molecule type" value="mRNA"/>
</dbReference>
<dbReference type="EMBL" id="BC024686">
    <property type="protein sequence ID" value="AAH24686.1"/>
    <property type="molecule type" value="mRNA"/>
</dbReference>
<dbReference type="EMBL" id="BC024896">
    <property type="protein sequence ID" value="AAH24896.1"/>
    <property type="molecule type" value="mRNA"/>
</dbReference>
<dbReference type="CCDS" id="CCDS39549.1"/>
<dbReference type="RefSeq" id="NP_059505.1">
    <property type="nucleotide sequence ID" value="NM_017477.2"/>
</dbReference>
<dbReference type="PDB" id="5A1U">
    <property type="method" value="EM"/>
    <property type="resolution" value="13.00 A"/>
    <property type="chains" value="E=1-874"/>
</dbReference>
<dbReference type="PDB" id="5A1V">
    <property type="method" value="EM"/>
    <property type="resolution" value="21.00 A"/>
    <property type="chains" value="E/M/V=1-874"/>
</dbReference>
<dbReference type="PDB" id="5A1W">
    <property type="method" value="EM"/>
    <property type="resolution" value="18.00 A"/>
    <property type="chains" value="E=1-874"/>
</dbReference>
<dbReference type="PDB" id="5A1X">
    <property type="method" value="EM"/>
    <property type="resolution" value="23.00 A"/>
    <property type="chains" value="E/M=1-874"/>
</dbReference>
<dbReference type="PDB" id="5A1Y">
    <property type="method" value="EM"/>
    <property type="resolution" value="21.00 A"/>
    <property type="chains" value="E/M/V=1-874"/>
</dbReference>
<dbReference type="PDB" id="5NZR">
    <property type="method" value="EM"/>
    <property type="resolution" value="9.20 A"/>
    <property type="chains" value="G/K=1-874"/>
</dbReference>
<dbReference type="PDB" id="5NZS">
    <property type="method" value="EM"/>
    <property type="resolution" value="10.10 A"/>
    <property type="chains" value="G/K=1-874"/>
</dbReference>
<dbReference type="PDB" id="5NZT">
    <property type="method" value="EM"/>
    <property type="resolution" value="17.00 A"/>
    <property type="chains" value="G/K=1-874"/>
</dbReference>
<dbReference type="PDB" id="5NZU">
    <property type="method" value="EM"/>
    <property type="resolution" value="15.00 A"/>
    <property type="chains" value="G/K=1-874"/>
</dbReference>
<dbReference type="PDB" id="5NZV">
    <property type="method" value="EM"/>
    <property type="resolution" value="17.30 A"/>
    <property type="chains" value="G/K/Q=1-874"/>
</dbReference>
<dbReference type="PDBsum" id="5A1U"/>
<dbReference type="PDBsum" id="5A1V"/>
<dbReference type="PDBsum" id="5A1W"/>
<dbReference type="PDBsum" id="5A1X"/>
<dbReference type="PDBsum" id="5A1Y"/>
<dbReference type="PDBsum" id="5NZR"/>
<dbReference type="PDBsum" id="5NZS"/>
<dbReference type="PDBsum" id="5NZT"/>
<dbReference type="PDBsum" id="5NZU"/>
<dbReference type="PDBsum" id="5NZV"/>
<dbReference type="EMDB" id="EMD-2985"/>
<dbReference type="EMDB" id="EMD-2986"/>
<dbReference type="EMDB" id="EMD-2987"/>
<dbReference type="EMDB" id="EMD-2988"/>
<dbReference type="EMDB" id="EMD-2989"/>
<dbReference type="EMDB" id="EMD-3720"/>
<dbReference type="EMDB" id="EMD-3721"/>
<dbReference type="EMDB" id="EMD-3722"/>
<dbReference type="EMDB" id="EMD-3723"/>
<dbReference type="EMDB" id="EMD-3724"/>
<dbReference type="SMR" id="Q9QZE5"/>
<dbReference type="BioGRID" id="207587">
    <property type="interactions" value="11"/>
</dbReference>
<dbReference type="FunCoup" id="Q9QZE5">
    <property type="interactions" value="3546"/>
</dbReference>
<dbReference type="STRING" id="10090.ENSMUSP00000109237"/>
<dbReference type="GlyGen" id="Q9QZE5">
    <property type="glycosylation" value="1 site, 1 O-linked glycan (1 site)"/>
</dbReference>
<dbReference type="iPTMnet" id="Q9QZE5"/>
<dbReference type="PhosphoSitePlus" id="Q9QZE5"/>
<dbReference type="SwissPalm" id="Q9QZE5"/>
<dbReference type="jPOST" id="Q9QZE5"/>
<dbReference type="PaxDb" id="10090-ENSMUSP00000109237"/>
<dbReference type="PeptideAtlas" id="Q9QZE5"/>
<dbReference type="ProteomicsDB" id="285248"/>
<dbReference type="Pumba" id="Q9QZE5"/>
<dbReference type="Antibodypedia" id="46660">
    <property type="antibodies" value="143 antibodies from 26 providers"/>
</dbReference>
<dbReference type="DNASU" id="54161"/>
<dbReference type="Ensembl" id="ENSMUST00000113607.10">
    <property type="protein sequence ID" value="ENSMUSP00000109237.4"/>
    <property type="gene ID" value="ENSMUSG00000030058.18"/>
</dbReference>
<dbReference type="GeneID" id="54161"/>
<dbReference type="KEGG" id="mmu:54161"/>
<dbReference type="UCSC" id="uc009cug.1">
    <property type="organism name" value="mouse"/>
</dbReference>
<dbReference type="AGR" id="MGI:1858696"/>
<dbReference type="CTD" id="22820"/>
<dbReference type="MGI" id="MGI:1858696">
    <property type="gene designation" value="Copg1"/>
</dbReference>
<dbReference type="VEuPathDB" id="HostDB:ENSMUSG00000030058"/>
<dbReference type="eggNOG" id="KOG1078">
    <property type="taxonomic scope" value="Eukaryota"/>
</dbReference>
<dbReference type="GeneTree" id="ENSGT00390000016313"/>
<dbReference type="HOGENOM" id="CLU_010353_2_0_1"/>
<dbReference type="InParanoid" id="Q9QZE5"/>
<dbReference type="OMA" id="RTIVECM"/>
<dbReference type="OrthoDB" id="1074925at2759"/>
<dbReference type="PhylomeDB" id="Q9QZE5"/>
<dbReference type="TreeFam" id="TF300324"/>
<dbReference type="Reactome" id="R-MMU-6807878">
    <property type="pathway name" value="COPI-mediated anterograde transport"/>
</dbReference>
<dbReference type="Reactome" id="R-MMU-6811434">
    <property type="pathway name" value="COPI-dependent Golgi-to-ER retrograde traffic"/>
</dbReference>
<dbReference type="BioGRID-ORCS" id="54161">
    <property type="hits" value="26 hits in 77 CRISPR screens"/>
</dbReference>
<dbReference type="ChiTaRS" id="Copg1">
    <property type="organism name" value="mouse"/>
</dbReference>
<dbReference type="EvolutionaryTrace" id="Q9QZE5"/>
<dbReference type="PRO" id="PR:Q9QZE5"/>
<dbReference type="Proteomes" id="UP000000589">
    <property type="component" value="Chromosome 6"/>
</dbReference>
<dbReference type="RNAct" id="Q9QZE5">
    <property type="molecule type" value="protein"/>
</dbReference>
<dbReference type="Bgee" id="ENSMUSG00000030058">
    <property type="expression patterns" value="Expressed in embryonic brain and 284 other cell types or tissues"/>
</dbReference>
<dbReference type="ExpressionAtlas" id="Q9QZE5">
    <property type="expression patterns" value="baseline and differential"/>
</dbReference>
<dbReference type="GO" id="GO:0030126">
    <property type="term" value="C:COPI vesicle coat"/>
    <property type="evidence" value="ECO:0007669"/>
    <property type="project" value="InterPro"/>
</dbReference>
<dbReference type="GO" id="GO:0005829">
    <property type="term" value="C:cytosol"/>
    <property type="evidence" value="ECO:0007669"/>
    <property type="project" value="UniProtKB-SubCell"/>
</dbReference>
<dbReference type="GO" id="GO:0000139">
    <property type="term" value="C:Golgi membrane"/>
    <property type="evidence" value="ECO:0000314"/>
    <property type="project" value="MGI"/>
</dbReference>
<dbReference type="GO" id="GO:0005198">
    <property type="term" value="F:structural molecule activity"/>
    <property type="evidence" value="ECO:0007669"/>
    <property type="project" value="InterPro"/>
</dbReference>
<dbReference type="GO" id="GO:0051683">
    <property type="term" value="P:establishment of Golgi localization"/>
    <property type="evidence" value="ECO:0007669"/>
    <property type="project" value="Ensembl"/>
</dbReference>
<dbReference type="GO" id="GO:0006886">
    <property type="term" value="P:intracellular protein transport"/>
    <property type="evidence" value="ECO:0007669"/>
    <property type="project" value="InterPro"/>
</dbReference>
<dbReference type="GO" id="GO:0072384">
    <property type="term" value="P:organelle transport along microtubule"/>
    <property type="evidence" value="ECO:0007669"/>
    <property type="project" value="Ensembl"/>
</dbReference>
<dbReference type="GO" id="GO:0016192">
    <property type="term" value="P:vesicle-mediated transport"/>
    <property type="evidence" value="ECO:0007669"/>
    <property type="project" value="UniProtKB-KW"/>
</dbReference>
<dbReference type="FunFam" id="1.25.10.10:FF:000038">
    <property type="entry name" value="Coatomer subunit gamma"/>
    <property type="match status" value="1"/>
</dbReference>
<dbReference type="FunFam" id="2.60.40.1480:FF:000001">
    <property type="entry name" value="Coatomer subunit gamma"/>
    <property type="match status" value="1"/>
</dbReference>
<dbReference type="FunFam" id="3.30.310.10:FF:000006">
    <property type="entry name" value="Coatomer subunit gamma"/>
    <property type="match status" value="1"/>
</dbReference>
<dbReference type="FunFam" id="1.25.10.10:FF:001568">
    <property type="entry name" value="Uncharacterized protein"/>
    <property type="match status" value="1"/>
</dbReference>
<dbReference type="Gene3D" id="2.60.40.1480">
    <property type="entry name" value="Coatomer, gamma subunit, appendage domain"/>
    <property type="match status" value="1"/>
</dbReference>
<dbReference type="Gene3D" id="1.25.10.10">
    <property type="entry name" value="Leucine-rich Repeat Variant"/>
    <property type="match status" value="2"/>
</dbReference>
<dbReference type="Gene3D" id="3.30.310.10">
    <property type="entry name" value="TATA-Binding Protein"/>
    <property type="match status" value="1"/>
</dbReference>
<dbReference type="InterPro" id="IPR011989">
    <property type="entry name" value="ARM-like"/>
</dbReference>
<dbReference type="InterPro" id="IPR016024">
    <property type="entry name" value="ARM-type_fold"/>
</dbReference>
<dbReference type="InterPro" id="IPR002553">
    <property type="entry name" value="Clathrin/coatomer_adapt-like_N"/>
</dbReference>
<dbReference type="InterPro" id="IPR013041">
    <property type="entry name" value="Clathrin_app_Ig-like_sf"/>
</dbReference>
<dbReference type="InterPro" id="IPR009028">
    <property type="entry name" value="Coatomer/calthrin_app_sub_C"/>
</dbReference>
<dbReference type="InterPro" id="IPR032154">
    <property type="entry name" value="Coatomer_g_Cpla"/>
</dbReference>
<dbReference type="InterPro" id="IPR017106">
    <property type="entry name" value="Coatomer_gsu"/>
</dbReference>
<dbReference type="InterPro" id="IPR013040">
    <property type="entry name" value="Coatomer_gsu_app_Ig-like_dom"/>
</dbReference>
<dbReference type="InterPro" id="IPR037067">
    <property type="entry name" value="Coatomer_gsu_app_sf"/>
</dbReference>
<dbReference type="InterPro" id="IPR012295">
    <property type="entry name" value="TBP_dom_sf"/>
</dbReference>
<dbReference type="PANTHER" id="PTHR10261">
    <property type="entry name" value="COATOMER SUBUNIT GAMMA"/>
    <property type="match status" value="1"/>
</dbReference>
<dbReference type="PANTHER" id="PTHR10261:SF3">
    <property type="entry name" value="COATOMER SUBUNIT GAMMA-1"/>
    <property type="match status" value="1"/>
</dbReference>
<dbReference type="Pfam" id="PF01602">
    <property type="entry name" value="Adaptin_N"/>
    <property type="match status" value="1"/>
</dbReference>
<dbReference type="Pfam" id="PF16381">
    <property type="entry name" value="Coatomer_g_Cpla"/>
    <property type="match status" value="1"/>
</dbReference>
<dbReference type="Pfam" id="PF08752">
    <property type="entry name" value="COP-gamma_platf"/>
    <property type="match status" value="1"/>
</dbReference>
<dbReference type="PIRSF" id="PIRSF037093">
    <property type="entry name" value="Coatomer_gamma_subunit"/>
    <property type="match status" value="1"/>
</dbReference>
<dbReference type="SUPFAM" id="SSF48371">
    <property type="entry name" value="ARM repeat"/>
    <property type="match status" value="1"/>
</dbReference>
<dbReference type="SUPFAM" id="SSF49348">
    <property type="entry name" value="Clathrin adaptor appendage domain"/>
    <property type="match status" value="1"/>
</dbReference>
<dbReference type="SUPFAM" id="SSF55711">
    <property type="entry name" value="Subdomain of clathrin and coatomer appendage domain"/>
    <property type="match status" value="1"/>
</dbReference>